<keyword id="KW-0143">Chaperone</keyword>
<keyword id="KW-1015">Disulfide bond</keyword>
<keyword id="KW-0574">Periplasm</keyword>
<keyword id="KW-0732">Signal</keyword>
<feature type="signal peptide" evidence="1">
    <location>
        <begin position="1"/>
        <end position="26"/>
    </location>
</feature>
<feature type="chain" id="PRO_0000338632" description="Probable acid stress chaperone HdeA">
    <location>
        <begin position="27"/>
        <end position="114"/>
    </location>
</feature>
<feature type="disulfide bond" evidence="1">
    <location>
        <begin position="46"/>
        <end position="94"/>
    </location>
</feature>
<dbReference type="EMBL" id="AE017224">
    <property type="protein sequence ID" value="AAX76233.1"/>
    <property type="molecule type" value="Genomic_DNA"/>
</dbReference>
<dbReference type="RefSeq" id="WP_002966248.1">
    <property type="nucleotide sequence ID" value="NC_006933.1"/>
</dbReference>
<dbReference type="SMR" id="Q577F1"/>
<dbReference type="EnsemblBacteria" id="AAX76233">
    <property type="protein sequence ID" value="AAX76233"/>
    <property type="gene ID" value="BruAb2_0840"/>
</dbReference>
<dbReference type="GeneID" id="93015292"/>
<dbReference type="KEGG" id="bmb:BruAb2_0840"/>
<dbReference type="HOGENOM" id="CLU_170142_0_0_5"/>
<dbReference type="PRO" id="PR:Q577F1"/>
<dbReference type="Proteomes" id="UP000000540">
    <property type="component" value="Chromosome II"/>
</dbReference>
<dbReference type="GO" id="GO:0030288">
    <property type="term" value="C:outer membrane-bounded periplasmic space"/>
    <property type="evidence" value="ECO:0007669"/>
    <property type="project" value="InterPro"/>
</dbReference>
<dbReference type="GO" id="GO:1990451">
    <property type="term" value="P:cellular stress response to acidic pH"/>
    <property type="evidence" value="ECO:0007669"/>
    <property type="project" value="UniProtKB-UniRule"/>
</dbReference>
<dbReference type="Gene3D" id="1.10.890.10">
    <property type="entry name" value="HNS-dependent expression A"/>
    <property type="match status" value="1"/>
</dbReference>
<dbReference type="HAMAP" id="MF_00946">
    <property type="entry name" value="HdeA"/>
    <property type="match status" value="1"/>
</dbReference>
<dbReference type="InterPro" id="IPR024972">
    <property type="entry name" value="HdeA"/>
</dbReference>
<dbReference type="InterPro" id="IPR038303">
    <property type="entry name" value="HdeA/HdeB_sf"/>
</dbReference>
<dbReference type="InterPro" id="IPR036831">
    <property type="entry name" value="HdeA_sf"/>
</dbReference>
<dbReference type="InterPro" id="IPR010486">
    <property type="entry name" value="HNS-dep_expression_A/B"/>
</dbReference>
<dbReference type="NCBIfam" id="NF007576">
    <property type="entry name" value="PRK10208.1"/>
    <property type="match status" value="1"/>
</dbReference>
<dbReference type="Pfam" id="PF06411">
    <property type="entry name" value="HdeA"/>
    <property type="match status" value="1"/>
</dbReference>
<dbReference type="PIRSF" id="PIRSF009564">
    <property type="entry name" value="HNS-dep_expression_A"/>
    <property type="match status" value="1"/>
</dbReference>
<dbReference type="SUPFAM" id="SSF47752">
    <property type="entry name" value="Protein HNS-dependent expression A, HdeA"/>
    <property type="match status" value="1"/>
</dbReference>
<accession>Q577F1</accession>
<gene>
    <name evidence="1" type="primary">hdeA</name>
    <name type="ordered locus">BruAb2_0840</name>
</gene>
<name>HDEA_BRUAB</name>
<proteinExistence type="inferred from homology"/>
<evidence type="ECO:0000255" key="1">
    <source>
        <dbReference type="HAMAP-Rule" id="MF_00946"/>
    </source>
</evidence>
<protein>
    <recommendedName>
        <fullName evidence="1">Probable acid stress chaperone HdeA</fullName>
    </recommendedName>
</protein>
<reference key="1">
    <citation type="journal article" date="2005" name="J. Bacteriol.">
        <title>Completion of the genome sequence of Brucella abortus and comparison to the highly similar genomes of Brucella melitensis and Brucella suis.</title>
        <authorList>
            <person name="Halling S.M."/>
            <person name="Peterson-Burch B.D."/>
            <person name="Bricker B.J."/>
            <person name="Zuerner R.L."/>
            <person name="Qing Z."/>
            <person name="Li L.-L."/>
            <person name="Kapur V."/>
            <person name="Alt D.P."/>
            <person name="Olsen S.C."/>
        </authorList>
    </citation>
    <scope>NUCLEOTIDE SEQUENCE [LARGE SCALE GENOMIC DNA]</scope>
    <source>
        <strain>9-941</strain>
    </source>
</reference>
<comment type="function">
    <text evidence="1">Required for optimal acid stress protection. Exhibits a chaperone-like activity only at low pH by suppressing non-specifically the aggregation of denaturated periplasmic proteins.</text>
</comment>
<comment type="subcellular location">
    <subcellularLocation>
        <location evidence="1">Periplasm</location>
    </subcellularLocation>
</comment>
<comment type="similarity">
    <text evidence="1">Belongs to the HdeA family.</text>
</comment>
<organism>
    <name type="scientific">Brucella abortus biovar 1 (strain 9-941)</name>
    <dbReference type="NCBI Taxonomy" id="262698"/>
    <lineage>
        <taxon>Bacteria</taxon>
        <taxon>Pseudomonadati</taxon>
        <taxon>Pseudomonadota</taxon>
        <taxon>Alphaproteobacteria</taxon>
        <taxon>Hyphomicrobiales</taxon>
        <taxon>Brucellaceae</taxon>
        <taxon>Brucella/Ochrobactrum group</taxon>
        <taxon>Brucella</taxon>
    </lineage>
</organism>
<sequence length="114" mass="12332">MIKALFNKNTALAAVAILALSGGAMAESAKTHKTDMAKKKVSELTCEDFNGLEESFKPTVVGWVVGFNKKGKEEDAVIDVDGIETVTPAIIEACKQEPKASFWKKAEAELKKVF</sequence>